<gene>
    <name type="primary">IDP1</name>
    <name type="ordered locus">YDL066W</name>
</gene>
<dbReference type="EC" id="1.1.1.42"/>
<dbReference type="EMBL" id="M57229">
    <property type="protein sequence ID" value="AAA34703.1"/>
    <property type="molecule type" value="Genomic_DNA"/>
</dbReference>
<dbReference type="EMBL" id="Z74114">
    <property type="protein sequence ID" value="CAA98631.1"/>
    <property type="molecule type" value="Genomic_DNA"/>
</dbReference>
<dbReference type="EMBL" id="BK006938">
    <property type="protein sequence ID" value="DAA11791.1"/>
    <property type="molecule type" value="Genomic_DNA"/>
</dbReference>
<dbReference type="PIR" id="A38610">
    <property type="entry name" value="DCBYIS"/>
</dbReference>
<dbReference type="RefSeq" id="NP_010217.1">
    <property type="nucleotide sequence ID" value="NM_001180125.1"/>
</dbReference>
<dbReference type="PDB" id="2QFV">
    <property type="method" value="X-ray"/>
    <property type="resolution" value="2.30 A"/>
    <property type="chains" value="A/B/C/D=16-428"/>
</dbReference>
<dbReference type="PDB" id="2QFW">
    <property type="method" value="X-ray"/>
    <property type="resolution" value="2.60 A"/>
    <property type="chains" value="A/B/C/D/E/F=16-428"/>
</dbReference>
<dbReference type="PDB" id="2QFX">
    <property type="method" value="X-ray"/>
    <property type="resolution" value="2.70 A"/>
    <property type="chains" value="A/B/C/D/E/F=16-428"/>
</dbReference>
<dbReference type="PDB" id="2QFY">
    <property type="method" value="X-ray"/>
    <property type="resolution" value="2.10 A"/>
    <property type="chains" value="A/B/C/D/E/F=16-428"/>
</dbReference>
<dbReference type="PDBsum" id="2QFV"/>
<dbReference type="PDBsum" id="2QFW"/>
<dbReference type="PDBsum" id="2QFX"/>
<dbReference type="PDBsum" id="2QFY"/>
<dbReference type="SMR" id="P21954"/>
<dbReference type="BioGRID" id="31993">
    <property type="interactions" value="113"/>
</dbReference>
<dbReference type="DIP" id="DIP-4494N"/>
<dbReference type="FunCoup" id="P21954">
    <property type="interactions" value="1037"/>
</dbReference>
<dbReference type="IntAct" id="P21954">
    <property type="interactions" value="43"/>
</dbReference>
<dbReference type="MINT" id="P21954"/>
<dbReference type="STRING" id="4932.YDL066W"/>
<dbReference type="iPTMnet" id="P21954"/>
<dbReference type="PaxDb" id="4932-YDL066W"/>
<dbReference type="PeptideAtlas" id="P21954"/>
<dbReference type="EnsemblFungi" id="YDL066W_mRNA">
    <property type="protein sequence ID" value="YDL066W"/>
    <property type="gene ID" value="YDL066W"/>
</dbReference>
<dbReference type="GeneID" id="851493"/>
<dbReference type="KEGG" id="sce:YDL066W"/>
<dbReference type="AGR" id="SGD:S000002224"/>
<dbReference type="SGD" id="S000002224">
    <property type="gene designation" value="IDP1"/>
</dbReference>
<dbReference type="VEuPathDB" id="FungiDB:YDL066W"/>
<dbReference type="eggNOG" id="KOG1526">
    <property type="taxonomic scope" value="Eukaryota"/>
</dbReference>
<dbReference type="GeneTree" id="ENSGT00390000012547"/>
<dbReference type="HOGENOM" id="CLU_023296_1_1_1"/>
<dbReference type="InParanoid" id="P21954"/>
<dbReference type="OMA" id="HGTVQRH"/>
<dbReference type="OrthoDB" id="248923at2759"/>
<dbReference type="BioCyc" id="YEAST:YDL066W-MONOMER"/>
<dbReference type="BRENDA" id="1.1.1.42">
    <property type="organism ID" value="984"/>
</dbReference>
<dbReference type="Reactome" id="R-SCE-389542">
    <property type="pathway name" value="NADPH regeneration"/>
</dbReference>
<dbReference type="Reactome" id="R-SCE-6798695">
    <property type="pathway name" value="Neutrophil degranulation"/>
</dbReference>
<dbReference type="Reactome" id="R-SCE-9033241">
    <property type="pathway name" value="Peroxisomal protein import"/>
</dbReference>
<dbReference type="SABIO-RK" id="P21954"/>
<dbReference type="BioGRID-ORCS" id="851493">
    <property type="hits" value="1 hit in 10 CRISPR screens"/>
</dbReference>
<dbReference type="EvolutionaryTrace" id="P21954"/>
<dbReference type="PRO" id="PR:P21954"/>
<dbReference type="Proteomes" id="UP000002311">
    <property type="component" value="Chromosome IV"/>
</dbReference>
<dbReference type="RNAct" id="P21954">
    <property type="molecule type" value="protein"/>
</dbReference>
<dbReference type="GO" id="GO:0042645">
    <property type="term" value="C:mitochondrial nucleoid"/>
    <property type="evidence" value="ECO:0000314"/>
    <property type="project" value="SGD"/>
</dbReference>
<dbReference type="GO" id="GO:0005739">
    <property type="term" value="C:mitochondrion"/>
    <property type="evidence" value="ECO:0000314"/>
    <property type="project" value="SGD"/>
</dbReference>
<dbReference type="GO" id="GO:0004450">
    <property type="term" value="F:isocitrate dehydrogenase (NADP+) activity"/>
    <property type="evidence" value="ECO:0000314"/>
    <property type="project" value="SGD"/>
</dbReference>
<dbReference type="GO" id="GO:0000287">
    <property type="term" value="F:magnesium ion binding"/>
    <property type="evidence" value="ECO:0007669"/>
    <property type="project" value="InterPro"/>
</dbReference>
<dbReference type="GO" id="GO:0051287">
    <property type="term" value="F:NAD binding"/>
    <property type="evidence" value="ECO:0007669"/>
    <property type="project" value="InterPro"/>
</dbReference>
<dbReference type="GO" id="GO:0006537">
    <property type="term" value="P:glutamate biosynthetic process"/>
    <property type="evidence" value="ECO:0000316"/>
    <property type="project" value="SGD"/>
</dbReference>
<dbReference type="GO" id="GO:0006097">
    <property type="term" value="P:glyoxylate cycle"/>
    <property type="evidence" value="ECO:0007669"/>
    <property type="project" value="UniProtKB-KW"/>
</dbReference>
<dbReference type="GO" id="GO:0006102">
    <property type="term" value="P:isocitrate metabolic process"/>
    <property type="evidence" value="ECO:0000318"/>
    <property type="project" value="GO_Central"/>
</dbReference>
<dbReference type="GO" id="GO:0006739">
    <property type="term" value="P:NADP metabolic process"/>
    <property type="evidence" value="ECO:0000318"/>
    <property type="project" value="GO_Central"/>
</dbReference>
<dbReference type="GO" id="GO:0006099">
    <property type="term" value="P:tricarboxylic acid cycle"/>
    <property type="evidence" value="ECO:0007669"/>
    <property type="project" value="UniProtKB-KW"/>
</dbReference>
<dbReference type="FunFam" id="3.40.718.10:FF:000002">
    <property type="entry name" value="Isocitrate dehydrogenase [NADP]"/>
    <property type="match status" value="1"/>
</dbReference>
<dbReference type="Gene3D" id="3.40.718.10">
    <property type="entry name" value="Isopropylmalate Dehydrogenase"/>
    <property type="match status" value="1"/>
</dbReference>
<dbReference type="InterPro" id="IPR019818">
    <property type="entry name" value="IsoCit/isopropylmalate_DH_CS"/>
</dbReference>
<dbReference type="InterPro" id="IPR004790">
    <property type="entry name" value="Isocitrate_DH_NADP"/>
</dbReference>
<dbReference type="InterPro" id="IPR024084">
    <property type="entry name" value="IsoPropMal-DH-like_dom"/>
</dbReference>
<dbReference type="NCBIfam" id="TIGR00127">
    <property type="entry name" value="nadp_idh_euk"/>
    <property type="match status" value="1"/>
</dbReference>
<dbReference type="NCBIfam" id="NF006156">
    <property type="entry name" value="PRK08299.1"/>
    <property type="match status" value="1"/>
</dbReference>
<dbReference type="PANTHER" id="PTHR11822:SF21">
    <property type="entry name" value="ISOCITRATE DEHYDROGENASE [NADP], MITOCHONDRIAL"/>
    <property type="match status" value="1"/>
</dbReference>
<dbReference type="PANTHER" id="PTHR11822">
    <property type="entry name" value="NADP-SPECIFIC ISOCITRATE DEHYDROGENASE"/>
    <property type="match status" value="1"/>
</dbReference>
<dbReference type="Pfam" id="PF00180">
    <property type="entry name" value="Iso_dh"/>
    <property type="match status" value="1"/>
</dbReference>
<dbReference type="PIRSF" id="PIRSF000108">
    <property type="entry name" value="IDH_NADP"/>
    <property type="match status" value="1"/>
</dbReference>
<dbReference type="SMART" id="SM01329">
    <property type="entry name" value="Iso_dh"/>
    <property type="match status" value="1"/>
</dbReference>
<dbReference type="SUPFAM" id="SSF53659">
    <property type="entry name" value="Isocitrate/Isopropylmalate dehydrogenase-like"/>
    <property type="match status" value="1"/>
</dbReference>
<dbReference type="PROSITE" id="PS00470">
    <property type="entry name" value="IDH_IMDH"/>
    <property type="match status" value="1"/>
</dbReference>
<feature type="transit peptide" description="Mitochondrion" evidence="2">
    <location>
        <begin position="1"/>
        <end position="16"/>
    </location>
</feature>
<feature type="chain" id="PRO_0000014426" description="Isocitrate dehydrogenase [NADP], mitochondrial">
    <location>
        <begin position="17"/>
        <end position="428"/>
    </location>
</feature>
<feature type="binding site" evidence="1">
    <location>
        <begin position="91"/>
        <end position="93"/>
    </location>
    <ligand>
        <name>NADP(+)</name>
        <dbReference type="ChEBI" id="CHEBI:58349"/>
    </ligand>
</feature>
<feature type="binding site" evidence="1">
    <location>
        <position position="93"/>
    </location>
    <ligand>
        <name>substrate</name>
    </ligand>
</feature>
<feature type="binding site" evidence="1">
    <location>
        <position position="98"/>
    </location>
    <ligand>
        <name>NADP(+)</name>
        <dbReference type="ChEBI" id="CHEBI:58349"/>
    </ligand>
</feature>
<feature type="binding site" evidence="1">
    <location>
        <begin position="110"/>
        <end position="116"/>
    </location>
    <ligand>
        <name>substrate</name>
    </ligand>
</feature>
<feature type="binding site" evidence="1">
    <location>
        <position position="125"/>
    </location>
    <ligand>
        <name>substrate</name>
    </ligand>
</feature>
<feature type="binding site" evidence="1">
    <location>
        <position position="148"/>
    </location>
    <ligand>
        <name>substrate</name>
    </ligand>
</feature>
<feature type="binding site" evidence="1">
    <location>
        <position position="269"/>
    </location>
    <ligand>
        <name>Mn(2+)</name>
        <dbReference type="ChEBI" id="CHEBI:29035"/>
    </ligand>
</feature>
<feature type="binding site" evidence="1">
    <location>
        <position position="277"/>
    </location>
    <ligand>
        <name>NADP(+)</name>
        <dbReference type="ChEBI" id="CHEBI:58349"/>
    </ligand>
</feature>
<feature type="binding site" evidence="1">
    <location>
        <position position="292"/>
    </location>
    <ligand>
        <name>Mn(2+)</name>
        <dbReference type="ChEBI" id="CHEBI:29035"/>
    </ligand>
</feature>
<feature type="binding site" evidence="1">
    <location>
        <begin position="327"/>
        <end position="332"/>
    </location>
    <ligand>
        <name>NADP(+)</name>
        <dbReference type="ChEBI" id="CHEBI:58349"/>
    </ligand>
</feature>
<feature type="binding site" evidence="1">
    <location>
        <position position="345"/>
    </location>
    <ligand>
        <name>NADP(+)</name>
        <dbReference type="ChEBI" id="CHEBI:58349"/>
    </ligand>
</feature>
<feature type="site" description="Critical for catalysis" evidence="1">
    <location>
        <position position="155"/>
    </location>
</feature>
<feature type="site" description="Critical for catalysis" evidence="1">
    <location>
        <position position="229"/>
    </location>
</feature>
<feature type="strand" evidence="5">
    <location>
        <begin position="26"/>
        <end position="30"/>
    </location>
</feature>
<feature type="helix" evidence="5">
    <location>
        <begin position="33"/>
        <end position="46"/>
    </location>
</feature>
<feature type="turn" evidence="5">
    <location>
        <begin position="47"/>
        <end position="50"/>
    </location>
</feature>
<feature type="strand" evidence="5">
    <location>
        <begin position="55"/>
        <end position="59"/>
    </location>
</feature>
<feature type="helix" evidence="5">
    <location>
        <begin position="62"/>
        <end position="67"/>
    </location>
</feature>
<feature type="turn" evidence="5">
    <location>
        <begin position="68"/>
        <end position="70"/>
    </location>
</feature>
<feature type="helix" evidence="5">
    <location>
        <begin position="71"/>
        <end position="83"/>
    </location>
</feature>
<feature type="strand" evidence="5">
    <location>
        <begin position="84"/>
        <end position="88"/>
    </location>
</feature>
<feature type="helix" evidence="5">
    <location>
        <begin position="96"/>
        <end position="101"/>
    </location>
</feature>
<feature type="helix" evidence="5">
    <location>
        <begin position="111"/>
        <end position="119"/>
    </location>
</feature>
<feature type="strand" evidence="5">
    <location>
        <begin position="121"/>
        <end position="127"/>
    </location>
</feature>
<feature type="strand" evidence="5">
    <location>
        <begin position="142"/>
        <end position="149"/>
    </location>
</feature>
<feature type="helix" evidence="5">
    <location>
        <begin position="153"/>
        <end position="156"/>
    </location>
</feature>
<feature type="strand" evidence="5">
    <location>
        <begin position="158"/>
        <end position="162"/>
    </location>
</feature>
<feature type="strand" evidence="5">
    <location>
        <begin position="164"/>
        <end position="175"/>
    </location>
</feature>
<feature type="turn" evidence="5">
    <location>
        <begin position="177"/>
        <end position="179"/>
    </location>
</feature>
<feature type="strand" evidence="5">
    <location>
        <begin position="183"/>
        <end position="192"/>
    </location>
</feature>
<feature type="strand" evidence="5">
    <location>
        <begin position="194"/>
        <end position="202"/>
    </location>
</feature>
<feature type="helix" evidence="5">
    <location>
        <begin position="203"/>
        <end position="220"/>
    </location>
</feature>
<feature type="strand" evidence="5">
    <location>
        <begin position="224"/>
        <end position="228"/>
    </location>
</feature>
<feature type="turn" evidence="5">
    <location>
        <begin position="230"/>
        <end position="232"/>
    </location>
</feature>
<feature type="helix" evidence="5">
    <location>
        <begin position="236"/>
        <end position="251"/>
    </location>
</feature>
<feature type="helix" evidence="5">
    <location>
        <begin position="253"/>
        <end position="259"/>
    </location>
</feature>
<feature type="strand" evidence="5">
    <location>
        <begin position="263"/>
        <end position="267"/>
    </location>
</feature>
<feature type="helix" evidence="5">
    <location>
        <begin position="268"/>
        <end position="277"/>
    </location>
</feature>
<feature type="strand" evidence="5">
    <location>
        <begin position="280"/>
        <end position="286"/>
    </location>
</feature>
<feature type="helix" evidence="5">
    <location>
        <begin position="288"/>
        <end position="302"/>
    </location>
</feature>
<feature type="strand" evidence="5">
    <location>
        <begin position="307"/>
        <end position="313"/>
    </location>
</feature>
<feature type="strand" evidence="4">
    <location>
        <begin position="315"/>
        <end position="318"/>
    </location>
</feature>
<feature type="strand" evidence="5">
    <location>
        <begin position="320"/>
        <end position="323"/>
    </location>
</feature>
<feature type="helix" evidence="5">
    <location>
        <begin position="330"/>
        <end position="337"/>
    </location>
</feature>
<feature type="helix" evidence="5">
    <location>
        <begin position="347"/>
        <end position="364"/>
    </location>
</feature>
<feature type="helix" evidence="5">
    <location>
        <begin position="367"/>
        <end position="385"/>
    </location>
</feature>
<feature type="helix" evidence="5">
    <location>
        <begin position="392"/>
        <end position="397"/>
    </location>
</feature>
<feature type="helix" evidence="5">
    <location>
        <begin position="403"/>
        <end position="405"/>
    </location>
</feature>
<feature type="helix" evidence="5">
    <location>
        <begin position="409"/>
        <end position="426"/>
    </location>
</feature>
<proteinExistence type="evidence at protein level"/>
<evidence type="ECO:0000250" key="1"/>
<evidence type="ECO:0000269" key="2">
    <source>
    </source>
</evidence>
<evidence type="ECO:0000305" key="3"/>
<evidence type="ECO:0007829" key="4">
    <source>
        <dbReference type="PDB" id="2QFX"/>
    </source>
</evidence>
<evidence type="ECO:0007829" key="5">
    <source>
        <dbReference type="PDB" id="2QFY"/>
    </source>
</evidence>
<protein>
    <recommendedName>
        <fullName>Isocitrate dehydrogenase [NADP], mitochondrial</fullName>
        <shortName>IDH</shortName>
        <ecNumber>1.1.1.42</ecNumber>
    </recommendedName>
    <alternativeName>
        <fullName>IDP</fullName>
    </alternativeName>
    <alternativeName>
        <fullName>NADP(+)-specific ICDH</fullName>
    </alternativeName>
    <alternativeName>
        <fullName>Oxalosuccinate decarboxylase</fullName>
    </alternativeName>
</protein>
<comment type="function">
    <text>Mitochondrial IDP1 may regulate flux through the tricarboxylic acid cycle and respiration. Its probably critical function is the production of NADPH.</text>
</comment>
<comment type="catalytic activity">
    <reaction>
        <text>D-threo-isocitrate + NADP(+) = 2-oxoglutarate + CO2 + NADPH</text>
        <dbReference type="Rhea" id="RHEA:19629"/>
        <dbReference type="ChEBI" id="CHEBI:15562"/>
        <dbReference type="ChEBI" id="CHEBI:16526"/>
        <dbReference type="ChEBI" id="CHEBI:16810"/>
        <dbReference type="ChEBI" id="CHEBI:57783"/>
        <dbReference type="ChEBI" id="CHEBI:58349"/>
        <dbReference type="EC" id="1.1.1.42"/>
    </reaction>
</comment>
<comment type="cofactor">
    <cofactor evidence="1">
        <name>Mg(2+)</name>
        <dbReference type="ChEBI" id="CHEBI:18420"/>
    </cofactor>
    <cofactor evidence="1">
        <name>Mn(2+)</name>
        <dbReference type="ChEBI" id="CHEBI:29035"/>
    </cofactor>
    <text evidence="1">Binds 1 Mg(2+) or Mn(2+) ion per subunit.</text>
</comment>
<comment type="activity regulation">
    <text>The enzyme is subject to end product inhibition by NADPH and 2-oxoglutarate.</text>
</comment>
<comment type="subunit">
    <text>Homodimer.</text>
</comment>
<comment type="interaction">
    <interactant intactId="EBI-8898">
        <id>P21954</id>
    </interactant>
    <interactant intactId="EBI-7876">
        <id>P16474</id>
        <label>KAR2</label>
    </interactant>
    <organismsDiffer>false</organismsDiffer>
    <experiments>2</experiments>
</comment>
<comment type="subcellular location">
    <subcellularLocation>
        <location>Mitochondrion</location>
    </subcellularLocation>
</comment>
<comment type="induction">
    <text>By growth with glucose as a carbon source.</text>
</comment>
<comment type="similarity">
    <text evidence="3">Belongs to the isocitrate and isopropylmalate dehydrogenases family.</text>
</comment>
<reference key="1">
    <citation type="journal article" date="1991" name="J. Biol. Chem.">
        <title>Isolation, nucleotide sequence, and disruption of the Saccharomyces cerevisiae gene encoding mitochondrial NADP(H)-specific isocitrate dehydrogenase.</title>
        <authorList>
            <person name="Haselbeck R.J."/>
            <person name="McAlister-Henn L."/>
        </authorList>
    </citation>
    <scope>NUCLEOTIDE SEQUENCE [GENOMIC DNA]</scope>
    <scope>PROTEIN SEQUENCE OF 17-36</scope>
</reference>
<reference key="2">
    <citation type="journal article" date="1997" name="Nature">
        <title>The nucleotide sequence of Saccharomyces cerevisiae chromosome IV.</title>
        <authorList>
            <person name="Jacq C."/>
            <person name="Alt-Moerbe J."/>
            <person name="Andre B."/>
            <person name="Arnold W."/>
            <person name="Bahr A."/>
            <person name="Ballesta J.P.G."/>
            <person name="Bargues M."/>
            <person name="Baron L."/>
            <person name="Becker A."/>
            <person name="Biteau N."/>
            <person name="Bloecker H."/>
            <person name="Blugeon C."/>
            <person name="Boskovic J."/>
            <person name="Brandt P."/>
            <person name="Brueckner M."/>
            <person name="Buitrago M.J."/>
            <person name="Coster F."/>
            <person name="Delaveau T."/>
            <person name="del Rey F."/>
            <person name="Dujon B."/>
            <person name="Eide L.G."/>
            <person name="Garcia-Cantalejo J.M."/>
            <person name="Goffeau A."/>
            <person name="Gomez-Peris A."/>
            <person name="Granotier C."/>
            <person name="Hanemann V."/>
            <person name="Hankeln T."/>
            <person name="Hoheisel J.D."/>
            <person name="Jaeger W."/>
            <person name="Jimenez A."/>
            <person name="Jonniaux J.-L."/>
            <person name="Kraemer C."/>
            <person name="Kuester H."/>
            <person name="Laamanen P."/>
            <person name="Legros Y."/>
            <person name="Louis E.J."/>
            <person name="Moeller-Rieker S."/>
            <person name="Monnet A."/>
            <person name="Moro M."/>
            <person name="Mueller-Auer S."/>
            <person name="Nussbaumer B."/>
            <person name="Paricio N."/>
            <person name="Paulin L."/>
            <person name="Perea J."/>
            <person name="Perez-Alonso M."/>
            <person name="Perez-Ortin J.E."/>
            <person name="Pohl T.M."/>
            <person name="Prydz H."/>
            <person name="Purnelle B."/>
            <person name="Rasmussen S.W."/>
            <person name="Remacha M.A."/>
            <person name="Revuelta J.L."/>
            <person name="Rieger M."/>
            <person name="Salom D."/>
            <person name="Saluz H.P."/>
            <person name="Saiz J.E."/>
            <person name="Saren A.-M."/>
            <person name="Schaefer M."/>
            <person name="Scharfe M."/>
            <person name="Schmidt E.R."/>
            <person name="Schneider C."/>
            <person name="Scholler P."/>
            <person name="Schwarz S."/>
            <person name="Soler-Mira A."/>
            <person name="Urrestarazu L.A."/>
            <person name="Verhasselt P."/>
            <person name="Vissers S."/>
            <person name="Voet M."/>
            <person name="Volckaert G."/>
            <person name="Wagner G."/>
            <person name="Wambutt R."/>
            <person name="Wedler E."/>
            <person name="Wedler H."/>
            <person name="Woelfl S."/>
            <person name="Harris D.E."/>
            <person name="Bowman S."/>
            <person name="Brown D."/>
            <person name="Churcher C.M."/>
            <person name="Connor R."/>
            <person name="Dedman K."/>
            <person name="Gentles S."/>
            <person name="Hamlin N."/>
            <person name="Hunt S."/>
            <person name="Jones L."/>
            <person name="McDonald S."/>
            <person name="Murphy L.D."/>
            <person name="Niblett D."/>
            <person name="Odell C."/>
            <person name="Oliver K."/>
            <person name="Rajandream M.A."/>
            <person name="Richards C."/>
            <person name="Shore L."/>
            <person name="Walsh S.V."/>
            <person name="Barrell B.G."/>
            <person name="Dietrich F.S."/>
            <person name="Mulligan J.T."/>
            <person name="Allen E."/>
            <person name="Araujo R."/>
            <person name="Aviles E."/>
            <person name="Berno A."/>
            <person name="Carpenter J."/>
            <person name="Chen E."/>
            <person name="Cherry J.M."/>
            <person name="Chung E."/>
            <person name="Duncan M."/>
            <person name="Hunicke-Smith S."/>
            <person name="Hyman R.W."/>
            <person name="Komp C."/>
            <person name="Lashkari D."/>
            <person name="Lew H."/>
            <person name="Lin D."/>
            <person name="Mosedale D."/>
            <person name="Nakahara K."/>
            <person name="Namath A."/>
            <person name="Oefner P."/>
            <person name="Oh C."/>
            <person name="Petel F.X."/>
            <person name="Roberts D."/>
            <person name="Schramm S."/>
            <person name="Schroeder M."/>
            <person name="Shogren T."/>
            <person name="Shroff N."/>
            <person name="Winant A."/>
            <person name="Yelton M.A."/>
            <person name="Botstein D."/>
            <person name="Davis R.W."/>
            <person name="Johnston M."/>
            <person name="Andrews S."/>
            <person name="Brinkman R."/>
            <person name="Cooper J."/>
            <person name="Ding H."/>
            <person name="Du Z."/>
            <person name="Favello A."/>
            <person name="Fulton L."/>
            <person name="Gattung S."/>
            <person name="Greco T."/>
            <person name="Hallsworth K."/>
            <person name="Hawkins J."/>
            <person name="Hillier L.W."/>
            <person name="Jier M."/>
            <person name="Johnson D."/>
            <person name="Johnston L."/>
            <person name="Kirsten J."/>
            <person name="Kucaba T."/>
            <person name="Langston Y."/>
            <person name="Latreille P."/>
            <person name="Le T."/>
            <person name="Mardis E."/>
            <person name="Menezes S."/>
            <person name="Miller N."/>
            <person name="Nhan M."/>
            <person name="Pauley A."/>
            <person name="Peluso D."/>
            <person name="Rifkin L."/>
            <person name="Riles L."/>
            <person name="Taich A."/>
            <person name="Trevaskis E."/>
            <person name="Vignati D."/>
            <person name="Wilcox L."/>
            <person name="Wohldman P."/>
            <person name="Vaudin M."/>
            <person name="Wilson R."/>
            <person name="Waterston R."/>
            <person name="Albermann K."/>
            <person name="Hani J."/>
            <person name="Heumann K."/>
            <person name="Kleine K."/>
            <person name="Mewes H.-W."/>
            <person name="Zollner A."/>
            <person name="Zaccaria P."/>
        </authorList>
    </citation>
    <scope>NUCLEOTIDE SEQUENCE [LARGE SCALE GENOMIC DNA]</scope>
    <source>
        <strain>ATCC 204508 / S288c</strain>
    </source>
</reference>
<reference key="3">
    <citation type="journal article" date="2014" name="G3 (Bethesda)">
        <title>The reference genome sequence of Saccharomyces cerevisiae: Then and now.</title>
        <authorList>
            <person name="Engel S.R."/>
            <person name="Dietrich F.S."/>
            <person name="Fisk D.G."/>
            <person name="Binkley G."/>
            <person name="Balakrishnan R."/>
            <person name="Costanzo M.C."/>
            <person name="Dwight S.S."/>
            <person name="Hitz B.C."/>
            <person name="Karra K."/>
            <person name="Nash R.S."/>
            <person name="Weng S."/>
            <person name="Wong E.D."/>
            <person name="Lloyd P."/>
            <person name="Skrzypek M.S."/>
            <person name="Miyasato S.R."/>
            <person name="Simison M."/>
            <person name="Cherry J.M."/>
        </authorList>
    </citation>
    <scope>GENOME REANNOTATION</scope>
    <source>
        <strain>ATCC 204508 / S288c</strain>
    </source>
</reference>
<organism>
    <name type="scientific">Saccharomyces cerevisiae (strain ATCC 204508 / S288c)</name>
    <name type="common">Baker's yeast</name>
    <dbReference type="NCBI Taxonomy" id="559292"/>
    <lineage>
        <taxon>Eukaryota</taxon>
        <taxon>Fungi</taxon>
        <taxon>Dikarya</taxon>
        <taxon>Ascomycota</taxon>
        <taxon>Saccharomycotina</taxon>
        <taxon>Saccharomycetes</taxon>
        <taxon>Saccharomycetales</taxon>
        <taxon>Saccharomycetaceae</taxon>
        <taxon>Saccharomyces</taxon>
    </lineage>
</organism>
<accession>P21954</accession>
<accession>D6VRT1</accession>
<keyword id="KW-0002">3D-structure</keyword>
<keyword id="KW-0903">Direct protein sequencing</keyword>
<keyword id="KW-0329">Glyoxylate bypass</keyword>
<keyword id="KW-0460">Magnesium</keyword>
<keyword id="KW-0464">Manganese</keyword>
<keyword id="KW-0479">Metal-binding</keyword>
<keyword id="KW-0496">Mitochondrion</keyword>
<keyword id="KW-0521">NADP</keyword>
<keyword id="KW-0560">Oxidoreductase</keyword>
<keyword id="KW-1185">Reference proteome</keyword>
<keyword id="KW-0809">Transit peptide</keyword>
<keyword id="KW-0816">Tricarboxylic acid cycle</keyword>
<sequence>MSMLSRRLFSTSRLAAFSKIKVKQPVVELDGDEMTRIIWDKIKKKLILPYLDVDLKYYDLSVESRDATSDKITQDAAEAIKKYGVGIKCATITPDEARVKEFNLHKMWKSPNGTIRNILGGTVFREPIVIPRIPRLVPRWEKPIIIGRHAHGDQYKATDTLIPGPGSLELVYKPSDPTTAQPQTLKVYDYKGSGVAMAMYNTDESIEGFAHSSFKLAIDKKLNLFLSTKNTILKKYDGRFKDIFQEVYEAQYKSKFEQLGIHYEHRLIDDMVAQMIKSKGGFIMALKNYDGDVQSDIVAQGFGSLGLMTSILVTPDGKTFESEAAHGTVTRHYRKYQKGEETSTNSIASIFAWSRGLLKRGELDNTPALCKFANILESATLNTVQQDGIMTKDLALACGNNERSAYVTTEEFLDAVEKRLQKEIKSIE</sequence>
<name>IDHP_YEAST</name>